<comment type="function">
    <text evidence="2">Acts as a chaperone.</text>
</comment>
<comment type="induction">
    <text evidence="2">By stress conditions e.g. heat shock.</text>
</comment>
<comment type="similarity">
    <text evidence="2">Belongs to the heat shock protein 70 family.</text>
</comment>
<gene>
    <name evidence="2" type="primary">dnaK</name>
    <name type="ordered locus">SpyM3_1531</name>
</gene>
<organism>
    <name type="scientific">Streptococcus pyogenes serotype M3 (strain ATCC BAA-595 / MGAS315)</name>
    <dbReference type="NCBI Taxonomy" id="198466"/>
    <lineage>
        <taxon>Bacteria</taxon>
        <taxon>Bacillati</taxon>
        <taxon>Bacillota</taxon>
        <taxon>Bacilli</taxon>
        <taxon>Lactobacillales</taxon>
        <taxon>Streptococcaceae</taxon>
        <taxon>Streptococcus</taxon>
    </lineage>
</organism>
<keyword id="KW-0067">ATP-binding</keyword>
<keyword id="KW-0143">Chaperone</keyword>
<keyword id="KW-0547">Nucleotide-binding</keyword>
<keyword id="KW-0597">Phosphoprotein</keyword>
<keyword id="KW-0346">Stress response</keyword>
<protein>
    <recommendedName>
        <fullName evidence="2">Chaperone protein DnaK</fullName>
    </recommendedName>
    <alternativeName>
        <fullName evidence="2">HSP70</fullName>
    </alternativeName>
    <alternativeName>
        <fullName evidence="2">Heat shock 70 kDa protein</fullName>
    </alternativeName>
    <alternativeName>
        <fullName evidence="2">Heat shock protein 70</fullName>
    </alternativeName>
</protein>
<accession>P0DB70</accession>
<accession>Q8K624</accession>
<feature type="initiator methionine" description="Removed" evidence="1">
    <location>
        <position position="1"/>
    </location>
</feature>
<feature type="chain" id="PRO_0000078557" description="Chaperone protein DnaK">
    <location>
        <begin position="2"/>
        <end position="608"/>
    </location>
</feature>
<feature type="region of interest" description="Disordered" evidence="3">
    <location>
        <begin position="578"/>
        <end position="608"/>
    </location>
</feature>
<feature type="compositionally biased region" description="Low complexity" evidence="3">
    <location>
        <begin position="578"/>
        <end position="598"/>
    </location>
</feature>
<feature type="compositionally biased region" description="Acidic residues" evidence="3">
    <location>
        <begin position="599"/>
        <end position="608"/>
    </location>
</feature>
<feature type="modified residue" description="Phosphothreonine; by autocatalysis" evidence="2">
    <location>
        <position position="173"/>
    </location>
</feature>
<evidence type="ECO:0000250" key="1"/>
<evidence type="ECO:0000255" key="2">
    <source>
        <dbReference type="HAMAP-Rule" id="MF_00332"/>
    </source>
</evidence>
<evidence type="ECO:0000256" key="3">
    <source>
        <dbReference type="SAM" id="MobiDB-lite"/>
    </source>
</evidence>
<dbReference type="EMBL" id="AE014074">
    <property type="protein sequence ID" value="AAM80138.1"/>
    <property type="molecule type" value="Genomic_DNA"/>
</dbReference>
<dbReference type="RefSeq" id="WP_011054941.1">
    <property type="nucleotide sequence ID" value="NC_004070.1"/>
</dbReference>
<dbReference type="SMR" id="P0DB70"/>
<dbReference type="KEGG" id="spg:SpyM3_1531"/>
<dbReference type="HOGENOM" id="CLU_005965_2_4_9"/>
<dbReference type="Proteomes" id="UP000000564">
    <property type="component" value="Chromosome"/>
</dbReference>
<dbReference type="GO" id="GO:0005524">
    <property type="term" value="F:ATP binding"/>
    <property type="evidence" value="ECO:0007669"/>
    <property type="project" value="UniProtKB-UniRule"/>
</dbReference>
<dbReference type="GO" id="GO:0140662">
    <property type="term" value="F:ATP-dependent protein folding chaperone"/>
    <property type="evidence" value="ECO:0007669"/>
    <property type="project" value="InterPro"/>
</dbReference>
<dbReference type="GO" id="GO:0051082">
    <property type="term" value="F:unfolded protein binding"/>
    <property type="evidence" value="ECO:0007669"/>
    <property type="project" value="InterPro"/>
</dbReference>
<dbReference type="CDD" id="cd10234">
    <property type="entry name" value="ASKHA_NBD_HSP70_DnaK-like"/>
    <property type="match status" value="1"/>
</dbReference>
<dbReference type="FunFam" id="2.60.34.10:FF:000014">
    <property type="entry name" value="Chaperone protein DnaK HSP70"/>
    <property type="match status" value="1"/>
</dbReference>
<dbReference type="FunFam" id="3.30.420.40:FF:000071">
    <property type="entry name" value="Molecular chaperone DnaK"/>
    <property type="match status" value="1"/>
</dbReference>
<dbReference type="FunFam" id="3.90.640.10:FF:000003">
    <property type="entry name" value="Molecular chaperone DnaK"/>
    <property type="match status" value="1"/>
</dbReference>
<dbReference type="Gene3D" id="1.20.1270.10">
    <property type="match status" value="1"/>
</dbReference>
<dbReference type="Gene3D" id="3.30.420.40">
    <property type="match status" value="2"/>
</dbReference>
<dbReference type="Gene3D" id="3.90.640.10">
    <property type="entry name" value="Actin, Chain A, domain 4"/>
    <property type="match status" value="1"/>
</dbReference>
<dbReference type="Gene3D" id="2.60.34.10">
    <property type="entry name" value="Substrate Binding Domain Of DNAk, Chain A, domain 1"/>
    <property type="match status" value="1"/>
</dbReference>
<dbReference type="HAMAP" id="MF_00332">
    <property type="entry name" value="DnaK"/>
    <property type="match status" value="1"/>
</dbReference>
<dbReference type="InterPro" id="IPR043129">
    <property type="entry name" value="ATPase_NBD"/>
</dbReference>
<dbReference type="InterPro" id="IPR012725">
    <property type="entry name" value="Chaperone_DnaK"/>
</dbReference>
<dbReference type="InterPro" id="IPR018181">
    <property type="entry name" value="Heat_shock_70_CS"/>
</dbReference>
<dbReference type="InterPro" id="IPR029048">
    <property type="entry name" value="HSP70_C_sf"/>
</dbReference>
<dbReference type="InterPro" id="IPR029047">
    <property type="entry name" value="HSP70_peptide-bd_sf"/>
</dbReference>
<dbReference type="InterPro" id="IPR013126">
    <property type="entry name" value="Hsp_70_fam"/>
</dbReference>
<dbReference type="NCBIfam" id="NF001413">
    <property type="entry name" value="PRK00290.1"/>
    <property type="match status" value="1"/>
</dbReference>
<dbReference type="NCBIfam" id="TIGR02350">
    <property type="entry name" value="prok_dnaK"/>
    <property type="match status" value="1"/>
</dbReference>
<dbReference type="PANTHER" id="PTHR19375">
    <property type="entry name" value="HEAT SHOCK PROTEIN 70KDA"/>
    <property type="match status" value="1"/>
</dbReference>
<dbReference type="Pfam" id="PF00012">
    <property type="entry name" value="HSP70"/>
    <property type="match status" value="1"/>
</dbReference>
<dbReference type="PRINTS" id="PR00301">
    <property type="entry name" value="HEATSHOCK70"/>
</dbReference>
<dbReference type="SUPFAM" id="SSF53067">
    <property type="entry name" value="Actin-like ATPase domain"/>
    <property type="match status" value="2"/>
</dbReference>
<dbReference type="SUPFAM" id="SSF100934">
    <property type="entry name" value="Heat shock protein 70kD (HSP70), C-terminal subdomain"/>
    <property type="match status" value="1"/>
</dbReference>
<dbReference type="SUPFAM" id="SSF100920">
    <property type="entry name" value="Heat shock protein 70kD (HSP70), peptide-binding domain"/>
    <property type="match status" value="1"/>
</dbReference>
<dbReference type="PROSITE" id="PS00297">
    <property type="entry name" value="HSP70_1"/>
    <property type="match status" value="1"/>
</dbReference>
<dbReference type="PROSITE" id="PS00329">
    <property type="entry name" value="HSP70_2"/>
    <property type="match status" value="1"/>
</dbReference>
<dbReference type="PROSITE" id="PS01036">
    <property type="entry name" value="HSP70_3"/>
    <property type="match status" value="1"/>
</dbReference>
<sequence>MSKIIGIDLGTTNSAVAVLEGTESKIIANPEGNRTTPSVVSFKNGEIIVGDAAKRQAVTNPDTVISIKSKMGTSEKVSANGKEYTPQEISAMILQYLKGYAEDYLGEKVEKAVITVPAYFNDAQRQATKDAGKIAGLEVERIVNEPTAAALAYGMDKTDKDEKILVFDLGGGTFDVSILELGDGVFDVLATAGDNKLGGDDFDQKIIDFLVAEFKKENGIDLSQDKMALQRLKDAAEKAKKDLSGVTQTQISLPFITAGSAGPLHLEMSLSRAKFDDLTRDLVERTKTPVRQALSDAGLSLSEIDEVILVGGSTRIPAVVEAVKAETGKEPNKSVNPDEVVAMGAAIQGGVITGDVKDVVLLDVTPLSLGIETMGGVFTKLIDRNTTIPTSKSQVFSTAADNQPAVDIHVLQGERPMAADNKTLGRFQLTDIPAAPRGIPQIEVTFDIDKNGIVSVKAKDLGTQKEQHIVIKSNDGLSEEEIDRMMKDAEANAEADAKRKEEVDLKNEVDQAIFATEKTIKETEGKGFDTERDAAQSALDELKAAQESGNLDDMKAKLEALNEKAQALAVKMYEQAAAAQQAAQGTEGAQANDSANNDDVVDGEFTEK</sequence>
<reference key="1">
    <citation type="journal article" date="2002" name="Proc. Natl. Acad. Sci. U.S.A.">
        <title>Genome sequence of a serotype M3 strain of group A Streptococcus: phage-encoded toxins, the high-virulence phenotype, and clone emergence.</title>
        <authorList>
            <person name="Beres S.B."/>
            <person name="Sylva G.L."/>
            <person name="Barbian K.D."/>
            <person name="Lei B."/>
            <person name="Hoff J.S."/>
            <person name="Mammarella N.D."/>
            <person name="Liu M.-Y."/>
            <person name="Smoot J.C."/>
            <person name="Porcella S.F."/>
            <person name="Parkins L.D."/>
            <person name="Campbell D.S."/>
            <person name="Smith T.M."/>
            <person name="McCormick J.K."/>
            <person name="Leung D.Y.M."/>
            <person name="Schlievert P.M."/>
            <person name="Musser J.M."/>
        </authorList>
    </citation>
    <scope>NUCLEOTIDE SEQUENCE [LARGE SCALE GENOMIC DNA]</scope>
    <source>
        <strain>ATCC BAA-595 / MGAS315</strain>
    </source>
</reference>
<name>DNAK_STRP3</name>
<proteinExistence type="inferred from homology"/>